<feature type="chain" id="PRO_0000407590" description="Snake venom metalloproteinase catroxase">
    <location>
        <begin position="1"/>
        <end position="25" status="greater than"/>
    </location>
</feature>
<feature type="binding site" evidence="1">
    <location>
        <position position="9"/>
    </location>
    <ligand>
        <name>Ca(2+)</name>
        <dbReference type="ChEBI" id="CHEBI:29108"/>
    </ligand>
</feature>
<feature type="non-terminal residue">
    <location>
        <position position="25"/>
    </location>
</feature>
<dbReference type="EC" id="3.4.21.-"/>
<dbReference type="PIR" id="PC1119">
    <property type="entry name" value="PC1119"/>
</dbReference>
<dbReference type="GO" id="GO:0005576">
    <property type="term" value="C:extracellular region"/>
    <property type="evidence" value="ECO:0007669"/>
    <property type="project" value="UniProtKB-SubCell"/>
</dbReference>
<dbReference type="GO" id="GO:0046872">
    <property type="term" value="F:metal ion binding"/>
    <property type="evidence" value="ECO:0007669"/>
    <property type="project" value="UniProtKB-KW"/>
</dbReference>
<dbReference type="GO" id="GO:0008233">
    <property type="term" value="F:peptidase activity"/>
    <property type="evidence" value="ECO:0007669"/>
    <property type="project" value="UniProtKB-KW"/>
</dbReference>
<dbReference type="GO" id="GO:0090729">
    <property type="term" value="F:toxin activity"/>
    <property type="evidence" value="ECO:0007669"/>
    <property type="project" value="UniProtKB-KW"/>
</dbReference>
<dbReference type="GO" id="GO:0006508">
    <property type="term" value="P:proteolysis"/>
    <property type="evidence" value="ECO:0007669"/>
    <property type="project" value="UniProtKB-KW"/>
</dbReference>
<dbReference type="SUPFAM" id="SSF55486">
    <property type="entry name" value="Metalloproteases ('zincins'), catalytic domain"/>
    <property type="match status" value="1"/>
</dbReference>
<keyword id="KW-0106">Calcium</keyword>
<keyword id="KW-0903">Direct protein sequencing</keyword>
<keyword id="KW-1206">Fibrinogenolytic toxin</keyword>
<keyword id="KW-1199">Hemostasis impairing toxin</keyword>
<keyword id="KW-0378">Hydrolase</keyword>
<keyword id="KW-0479">Metal-binding</keyword>
<keyword id="KW-0645">Protease</keyword>
<keyword id="KW-0964">Secreted</keyword>
<keyword id="KW-0800">Toxin</keyword>
<keyword id="KW-0862">Zinc</keyword>
<reference key="1">
    <citation type="journal article" date="1992" name="Biochem. Biophys. Res. Commun.">
        <title>Characterization of a protease with alpha- and beta-fibrinogenase activity from the Western diamondback rattlesnake, Crotalus atrox.</title>
        <authorList>
            <person name="Chiou S.-H."/>
            <person name="Hung C.-C."/>
            <person name="Huang K.-F."/>
        </authorList>
    </citation>
    <scope>PROTEIN SEQUENCE</scope>
    <scope>FUNCTION</scope>
    <scope>ACTIVITY REGULATION</scope>
    <scope>SUBUNIT</scope>
    <source>
        <tissue>Venom</tissue>
    </source>
</reference>
<accession>Q9PS48</accession>
<organism>
    <name type="scientific">Crotalus atrox</name>
    <name type="common">Western diamondback rattlesnake</name>
    <dbReference type="NCBI Taxonomy" id="8730"/>
    <lineage>
        <taxon>Eukaryota</taxon>
        <taxon>Metazoa</taxon>
        <taxon>Chordata</taxon>
        <taxon>Craniata</taxon>
        <taxon>Vertebrata</taxon>
        <taxon>Euteleostomi</taxon>
        <taxon>Lepidosauria</taxon>
        <taxon>Squamata</taxon>
        <taxon>Bifurcata</taxon>
        <taxon>Unidentata</taxon>
        <taxon>Episquamata</taxon>
        <taxon>Toxicofera</taxon>
        <taxon>Serpentes</taxon>
        <taxon>Colubroidea</taxon>
        <taxon>Viperidae</taxon>
        <taxon>Crotalinae</taxon>
        <taxon>Crotalus</taxon>
    </lineage>
</organism>
<protein>
    <recommendedName>
        <fullName>Snake venom metalloproteinase catroxase</fullName>
        <shortName>SVMP</shortName>
        <ecNumber>3.4.21.-</ecNumber>
    </recommendedName>
</protein>
<sequence length="25" mass="2998">TPDHQRYVELFIVVDHGMYTKYNGD</sequence>
<proteinExistence type="evidence at protein level"/>
<evidence type="ECO:0000250" key="1"/>
<evidence type="ECO:0000269" key="2">
    <source>
    </source>
</evidence>
<evidence type="ECO:0000305" key="3"/>
<name>VMXCA_CROAT</name>
<comment type="function">
    <text evidence="2">Metalloprotease that is highly active against alpha-(FGA) and beta-chains (FGB) of fibrinogen molecules.</text>
</comment>
<comment type="cofactor">
    <cofactor evidence="1">
        <name>Zn(2+)</name>
        <dbReference type="ChEBI" id="CHEBI:29105"/>
    </cofactor>
    <text evidence="1">Binds 1 zinc ion per subunit.</text>
</comment>
<comment type="activity regulation">
    <text evidence="2">Inhibited by EDTA, beta-mercaptoethanol, but not by PMSF, p-tosyl-L-phenylalanine chloromethyl ketone, p-tosyl-L-lysine chloromethyl ketone, soybean trypsin inhibitor and aprotinin.</text>
</comment>
<comment type="subunit">
    <text evidence="2">Monomer.</text>
</comment>
<comment type="subcellular location">
    <subcellularLocation>
        <location>Secreted</location>
    </subcellularLocation>
</comment>
<comment type="tissue specificity">
    <text>Expressed by the venom gland.</text>
</comment>
<comment type="miscellaneous">
    <text>Acidic protein of about 24 kDa.</text>
</comment>
<comment type="similarity">
    <text evidence="3">Belongs to the venom metalloproteinase (M12B) family.</text>
</comment>